<keyword id="KW-0007">Acetylation</keyword>
<keyword id="KW-0053">Apoptosis</keyword>
<keyword id="KW-0903">Direct protein sequencing</keyword>
<keyword id="KW-0249">Electron transport</keyword>
<keyword id="KW-0349">Heme</keyword>
<keyword id="KW-0408">Iron</keyword>
<keyword id="KW-0479">Metal-binding</keyword>
<keyword id="KW-0496">Mitochondrion</keyword>
<keyword id="KW-0597">Phosphoprotein</keyword>
<keyword id="KW-0679">Respiratory chain</keyword>
<keyword id="KW-0813">Transport</keyword>
<name>CYC_CAMDR</name>
<organism>
    <name type="scientific">Camelus dromedarius</name>
    <name type="common">Dromedary</name>
    <name type="synonym">Arabian camel</name>
    <dbReference type="NCBI Taxonomy" id="9838"/>
    <lineage>
        <taxon>Eukaryota</taxon>
        <taxon>Metazoa</taxon>
        <taxon>Chordata</taxon>
        <taxon>Craniata</taxon>
        <taxon>Vertebrata</taxon>
        <taxon>Euteleostomi</taxon>
        <taxon>Mammalia</taxon>
        <taxon>Eutheria</taxon>
        <taxon>Laurasiatheria</taxon>
        <taxon>Artiodactyla</taxon>
        <taxon>Tylopoda</taxon>
        <taxon>Camelidae</taxon>
        <taxon>Camelus</taxon>
    </lineage>
</organism>
<evidence type="ECO:0000250" key="1"/>
<evidence type="ECO:0000250" key="2">
    <source>
        <dbReference type="UniProtKB" id="P62894"/>
    </source>
</evidence>
<evidence type="ECO:0000250" key="3">
    <source>
        <dbReference type="UniProtKB" id="P62897"/>
    </source>
</evidence>
<evidence type="ECO:0000269" key="4">
    <source>
    </source>
</evidence>
<evidence type="ECO:0000305" key="5"/>
<proteinExistence type="evidence at protein level"/>
<accession>P68099</accession>
<accession>P00010</accession>
<feature type="initiator methionine" description="Removed" evidence="4">
    <location>
        <position position="1"/>
    </location>
</feature>
<feature type="chain" id="PRO_0000108210" description="Cytochrome c">
    <location>
        <begin position="2"/>
        <end position="105"/>
    </location>
</feature>
<feature type="binding site" description="covalent">
    <location>
        <position position="15"/>
    </location>
    <ligand>
        <name>heme c</name>
        <dbReference type="ChEBI" id="CHEBI:61717"/>
    </ligand>
</feature>
<feature type="binding site" description="covalent">
    <location>
        <position position="18"/>
    </location>
    <ligand>
        <name>heme c</name>
        <dbReference type="ChEBI" id="CHEBI:61717"/>
    </ligand>
</feature>
<feature type="binding site" description="axial binding residue">
    <location>
        <position position="19"/>
    </location>
    <ligand>
        <name>heme c</name>
        <dbReference type="ChEBI" id="CHEBI:61717"/>
    </ligand>
    <ligandPart>
        <name>Fe</name>
        <dbReference type="ChEBI" id="CHEBI:18248"/>
    </ligandPart>
</feature>
<feature type="binding site" description="axial binding residue">
    <location>
        <position position="81"/>
    </location>
    <ligand>
        <name>heme c</name>
        <dbReference type="ChEBI" id="CHEBI:61717"/>
    </ligand>
    <ligandPart>
        <name>Fe</name>
        <dbReference type="ChEBI" id="CHEBI:18248"/>
    </ligandPart>
</feature>
<feature type="modified residue" description="N-acetylglycine" evidence="4">
    <location>
        <position position="2"/>
    </location>
</feature>
<feature type="modified residue" description="Phosphotyrosine" evidence="2">
    <location>
        <position position="49"/>
    </location>
</feature>
<feature type="modified residue" description="N6-succinyllysine" evidence="3">
    <location>
        <position position="56"/>
    </location>
</feature>
<feature type="modified residue" description="N6-acetyllysine; alternate" evidence="3">
    <location>
        <position position="73"/>
    </location>
</feature>
<feature type="modified residue" description="N6-succinyllysine; alternate" evidence="3">
    <location>
        <position position="73"/>
    </location>
</feature>
<feature type="modified residue" description="Phosphotyrosine" evidence="2">
    <location>
        <position position="98"/>
    </location>
</feature>
<feature type="modified residue" description="N6-acetyllysine" evidence="3">
    <location>
        <position position="100"/>
    </location>
</feature>
<gene>
    <name type="primary">CYCS</name>
    <name type="synonym">CYC</name>
</gene>
<reference key="1">
    <citation type="journal article" date="1972" name="Biochemistry">
        <title>Primary structure of cytochrome c from the camel, Camelus dromedarius.</title>
        <authorList>
            <person name="Sokolovsky M."/>
            <person name="Moldovan M."/>
        </authorList>
    </citation>
    <scope>PROTEIN SEQUENCE OF 2-105</scope>
    <scope>ACETYLATION AT GLY-2</scope>
</reference>
<protein>
    <recommendedName>
        <fullName>Cytochrome c</fullName>
    </recommendedName>
</protein>
<sequence length="105" mass="11648">MGDVEKGKKIFVQKCAQCHTVEKGGKHKTGPNLHGLFGRKTGQAVGFSYTDANKNKGITWGEETLMEYLENPKKYIPGTKMIFAGIKKKGERADLIAYLKKATNE</sequence>
<dbReference type="PIR" id="A04607">
    <property type="entry name" value="CCCM"/>
</dbReference>
<dbReference type="SMR" id="P68099"/>
<dbReference type="STRING" id="9838.ENSCDRP00005000855"/>
<dbReference type="iPTMnet" id="P68099"/>
<dbReference type="GeneID" id="105095080"/>
<dbReference type="KEGG" id="cdk:105095080"/>
<dbReference type="OrthoDB" id="449280at2759"/>
<dbReference type="GO" id="GO:0005758">
    <property type="term" value="C:mitochondrial intermembrane space"/>
    <property type="evidence" value="ECO:0007669"/>
    <property type="project" value="UniProtKB-SubCell"/>
</dbReference>
<dbReference type="GO" id="GO:0009055">
    <property type="term" value="F:electron transfer activity"/>
    <property type="evidence" value="ECO:0007669"/>
    <property type="project" value="InterPro"/>
</dbReference>
<dbReference type="GO" id="GO:0020037">
    <property type="term" value="F:heme binding"/>
    <property type="evidence" value="ECO:0007669"/>
    <property type="project" value="InterPro"/>
</dbReference>
<dbReference type="GO" id="GO:0046872">
    <property type="term" value="F:metal ion binding"/>
    <property type="evidence" value="ECO:0007669"/>
    <property type="project" value="UniProtKB-KW"/>
</dbReference>
<dbReference type="GO" id="GO:0006915">
    <property type="term" value="P:apoptotic process"/>
    <property type="evidence" value="ECO:0007669"/>
    <property type="project" value="UniProtKB-KW"/>
</dbReference>
<dbReference type="FunFam" id="1.10.760.10:FF:000008">
    <property type="entry name" value="Cytochrome c"/>
    <property type="match status" value="1"/>
</dbReference>
<dbReference type="Gene3D" id="1.10.760.10">
    <property type="entry name" value="Cytochrome c-like domain"/>
    <property type="match status" value="1"/>
</dbReference>
<dbReference type="InterPro" id="IPR009056">
    <property type="entry name" value="Cyt_c-like_dom"/>
</dbReference>
<dbReference type="InterPro" id="IPR036909">
    <property type="entry name" value="Cyt_c-like_dom_sf"/>
</dbReference>
<dbReference type="InterPro" id="IPR002327">
    <property type="entry name" value="Cyt_c_1A/1B"/>
</dbReference>
<dbReference type="PANTHER" id="PTHR11961">
    <property type="entry name" value="CYTOCHROME C"/>
    <property type="match status" value="1"/>
</dbReference>
<dbReference type="Pfam" id="PF00034">
    <property type="entry name" value="Cytochrom_C"/>
    <property type="match status" value="1"/>
</dbReference>
<dbReference type="PRINTS" id="PR00604">
    <property type="entry name" value="CYTCHRMECIAB"/>
</dbReference>
<dbReference type="SUPFAM" id="SSF46626">
    <property type="entry name" value="Cytochrome c"/>
    <property type="match status" value="1"/>
</dbReference>
<dbReference type="PROSITE" id="PS51007">
    <property type="entry name" value="CYTC"/>
    <property type="match status" value="1"/>
</dbReference>
<comment type="function">
    <text>Electron carrier protein. The oxidized form of the cytochrome c heme group can accept an electron from the heme group of the cytochrome c1 subunit of cytochrome reductase. Cytochrome c then transfers this electron to the cytochrome oxidase complex, the final protein carrier in the mitochondrial electron-transport chain.</text>
</comment>
<comment type="function">
    <text evidence="1">Plays a role in apoptosis. Suppression of the anti-apoptotic members or activation of the pro-apoptotic members of the Bcl-2 family leads to altered mitochondrial membrane permeability resulting in release of cytochrome c into the cytosol. Binding of cytochrome c to Apaf-1 triggers the activation of caspase-9, which then accelerates apoptosis by activating other caspases (By similarity).</text>
</comment>
<comment type="subcellular location">
    <subcellularLocation>
        <location>Mitochondrion intermembrane space</location>
    </subcellularLocation>
    <text>Loosely associated with the inner membrane.</text>
</comment>
<comment type="PTM">
    <text>Binds 1 heme c group covalently per subunit.</text>
</comment>
<comment type="PTM">
    <text evidence="1">Phosphorylation at Tyr-49 and Tyr-98 both reduce by half the turnover in the reaction with cytochrome c oxidase, down-regulating mitochondrial respiration.</text>
</comment>
<comment type="similarity">
    <text evidence="5">Belongs to the cytochrome c family.</text>
</comment>
<comment type="online information" name="Protein Spotlight">
    <link uri="https://www.proteinspotlight.org/back_issues/076"/>
    <text>Life shuttle - Issue 76 of November 2006</text>
</comment>